<reference key="1">
    <citation type="journal article" date="2001" name="Nature">
        <title>Complete genome sequence of a multiple drug resistant Salmonella enterica serovar Typhi CT18.</title>
        <authorList>
            <person name="Parkhill J."/>
            <person name="Dougan G."/>
            <person name="James K.D."/>
            <person name="Thomson N.R."/>
            <person name="Pickard D."/>
            <person name="Wain J."/>
            <person name="Churcher C.M."/>
            <person name="Mungall K.L."/>
            <person name="Bentley S.D."/>
            <person name="Holden M.T.G."/>
            <person name="Sebaihia M."/>
            <person name="Baker S."/>
            <person name="Basham D."/>
            <person name="Brooks K."/>
            <person name="Chillingworth T."/>
            <person name="Connerton P."/>
            <person name="Cronin A."/>
            <person name="Davis P."/>
            <person name="Davies R.M."/>
            <person name="Dowd L."/>
            <person name="White N."/>
            <person name="Farrar J."/>
            <person name="Feltwell T."/>
            <person name="Hamlin N."/>
            <person name="Haque A."/>
            <person name="Hien T.T."/>
            <person name="Holroyd S."/>
            <person name="Jagels K."/>
            <person name="Krogh A."/>
            <person name="Larsen T.S."/>
            <person name="Leather S."/>
            <person name="Moule S."/>
            <person name="O'Gaora P."/>
            <person name="Parry C."/>
            <person name="Quail M.A."/>
            <person name="Rutherford K.M."/>
            <person name="Simmonds M."/>
            <person name="Skelton J."/>
            <person name="Stevens K."/>
            <person name="Whitehead S."/>
            <person name="Barrell B.G."/>
        </authorList>
    </citation>
    <scope>NUCLEOTIDE SEQUENCE [LARGE SCALE GENOMIC DNA]</scope>
    <source>
        <strain>CT18</strain>
    </source>
</reference>
<reference key="2">
    <citation type="journal article" date="2003" name="J. Bacteriol.">
        <title>Comparative genomics of Salmonella enterica serovar Typhi strains Ty2 and CT18.</title>
        <authorList>
            <person name="Deng W."/>
            <person name="Liou S.-R."/>
            <person name="Plunkett G. III"/>
            <person name="Mayhew G.F."/>
            <person name="Rose D.J."/>
            <person name="Burland V."/>
            <person name="Kodoyianni V."/>
            <person name="Schwartz D.C."/>
            <person name="Blattner F.R."/>
        </authorList>
    </citation>
    <scope>NUCLEOTIDE SEQUENCE [LARGE SCALE GENOMIC DNA]</scope>
    <source>
        <strain>ATCC 700931 / Ty2</strain>
    </source>
</reference>
<organism>
    <name type="scientific">Salmonella typhi</name>
    <dbReference type="NCBI Taxonomy" id="90370"/>
    <lineage>
        <taxon>Bacteria</taxon>
        <taxon>Pseudomonadati</taxon>
        <taxon>Pseudomonadota</taxon>
        <taxon>Gammaproteobacteria</taxon>
        <taxon>Enterobacterales</taxon>
        <taxon>Enterobacteriaceae</taxon>
        <taxon>Salmonella</taxon>
    </lineage>
</organism>
<comment type="function">
    <text evidence="2">NAD-dependent lysine deacetylase that specifically removes acetyl groups on target proteins. Also acts as a protein-lysine deacylase by mediating protein desuccinylation and de-2-hydroxyisobutyrylation. Modulates the activities of several proteins which are inactive in their acylated form.</text>
</comment>
<comment type="catalytic activity">
    <reaction evidence="2">
        <text>N(6)-acetyl-L-lysyl-[protein] + NAD(+) + H2O = 2''-O-acetyl-ADP-D-ribose + nicotinamide + L-lysyl-[protein]</text>
        <dbReference type="Rhea" id="RHEA:43636"/>
        <dbReference type="Rhea" id="RHEA-COMP:9752"/>
        <dbReference type="Rhea" id="RHEA-COMP:10731"/>
        <dbReference type="ChEBI" id="CHEBI:15377"/>
        <dbReference type="ChEBI" id="CHEBI:17154"/>
        <dbReference type="ChEBI" id="CHEBI:29969"/>
        <dbReference type="ChEBI" id="CHEBI:57540"/>
        <dbReference type="ChEBI" id="CHEBI:61930"/>
        <dbReference type="ChEBI" id="CHEBI:83767"/>
        <dbReference type="EC" id="2.3.1.286"/>
    </reaction>
</comment>
<comment type="catalytic activity">
    <reaction evidence="2">
        <text>N(6)-succinyl-L-lysyl-[protein] + NAD(+) + H2O = 2''-O-succinyl-ADP-D-ribose + nicotinamide + L-lysyl-[protein]</text>
        <dbReference type="Rhea" id="RHEA:47668"/>
        <dbReference type="Rhea" id="RHEA-COMP:9752"/>
        <dbReference type="Rhea" id="RHEA-COMP:11877"/>
        <dbReference type="ChEBI" id="CHEBI:15377"/>
        <dbReference type="ChEBI" id="CHEBI:17154"/>
        <dbReference type="ChEBI" id="CHEBI:29969"/>
        <dbReference type="ChEBI" id="CHEBI:57540"/>
        <dbReference type="ChEBI" id="CHEBI:87830"/>
        <dbReference type="ChEBI" id="CHEBI:87832"/>
    </reaction>
</comment>
<comment type="catalytic activity">
    <reaction evidence="2">
        <text>N(6)-(2-hydroxyisobutanoyl)-L-lysyl-[protein] + NAD(+) + H2O = 2''-O-(2-hydroxyisobutanoyl)-ADP-D-ribose + nicotinamide + L-lysyl-[protein]</text>
        <dbReference type="Rhea" id="RHEA:24364"/>
        <dbReference type="Rhea" id="RHEA-COMP:9752"/>
        <dbReference type="Rhea" id="RHEA-COMP:15921"/>
        <dbReference type="ChEBI" id="CHEBI:15377"/>
        <dbReference type="ChEBI" id="CHEBI:17154"/>
        <dbReference type="ChEBI" id="CHEBI:29969"/>
        <dbReference type="ChEBI" id="CHEBI:57540"/>
        <dbReference type="ChEBI" id="CHEBI:144968"/>
        <dbReference type="ChEBI" id="CHEBI:144969"/>
    </reaction>
</comment>
<comment type="cofactor">
    <cofactor evidence="2">
        <name>Zn(2+)</name>
        <dbReference type="ChEBI" id="CHEBI:29105"/>
    </cofactor>
    <text evidence="2">Binds 1 zinc ion per subunit.</text>
</comment>
<comment type="subcellular location">
    <subcellularLocation>
        <location evidence="2">Cytoplasm</location>
    </subcellularLocation>
</comment>
<comment type="alternative products">
    <event type="alternative promoter"/>
    <isoform>
        <id>P0A2F3-1</id>
        <name evidence="1">CobB-long</name>
        <sequence type="displayed"/>
    </isoform>
    <isoform>
        <id>P0A2F3-2</id>
        <name evidence="1">CobB-Short</name>
        <sequence type="described" ref="VSP_058461"/>
    </isoform>
</comment>
<comment type="domain">
    <text evidence="2">2 residues (Tyr-92 and Arg-95) present in a large hydrophobic pocket are probably involved in substrate specificity. They are important for desuccinylation activity, but dispensable for deacetylation activity.</text>
</comment>
<comment type="similarity">
    <text evidence="2">Belongs to the sirtuin family. Class III subfamily.</text>
</comment>
<comment type="sequence caution" evidence="4">
    <conflict type="erroneous initiation">
        <sequence resource="EMBL-CDS" id="AAO69324"/>
    </conflict>
    <text>Truncated N-terminus.</text>
</comment>
<comment type="sequence caution" evidence="4">
    <conflict type="erroneous initiation">
        <sequence resource="EMBL-CDS" id="CAD08345"/>
    </conflict>
    <text>Truncated N-terminus.</text>
</comment>
<dbReference type="EC" id="2.3.1.286" evidence="2"/>
<dbReference type="EMBL" id="AL513382">
    <property type="protein sequence ID" value="CAD08345.1"/>
    <property type="status" value="ALT_INIT"/>
    <property type="molecule type" value="Genomic_DNA"/>
</dbReference>
<dbReference type="EMBL" id="AE014613">
    <property type="protein sequence ID" value="AAO69324.1"/>
    <property type="status" value="ALT_INIT"/>
    <property type="molecule type" value="Genomic_DNA"/>
</dbReference>
<dbReference type="PIR" id="AF0645">
    <property type="entry name" value="AF0645"/>
</dbReference>
<dbReference type="RefSeq" id="NP_455713.3">
    <property type="nucleotide sequence ID" value="NC_003198.1"/>
</dbReference>
<dbReference type="RefSeq" id="WP_001191856.1">
    <property type="nucleotide sequence ID" value="NZ_WSUR01000030.1"/>
</dbReference>
<dbReference type="SMR" id="P0A2F3"/>
<dbReference type="STRING" id="220341.gene:17585225"/>
<dbReference type="KEGG" id="stt:t1699"/>
<dbReference type="KEGG" id="sty:STY1261"/>
<dbReference type="PATRIC" id="fig|220341.7.peg.1265"/>
<dbReference type="eggNOG" id="COG0846">
    <property type="taxonomic scope" value="Bacteria"/>
</dbReference>
<dbReference type="HOGENOM" id="CLU_023643_3_1_6"/>
<dbReference type="OMA" id="LIHMHGE"/>
<dbReference type="OrthoDB" id="9800582at2"/>
<dbReference type="Proteomes" id="UP000000541">
    <property type="component" value="Chromosome"/>
</dbReference>
<dbReference type="Proteomes" id="UP000002670">
    <property type="component" value="Chromosome"/>
</dbReference>
<dbReference type="GO" id="GO:0005737">
    <property type="term" value="C:cytoplasm"/>
    <property type="evidence" value="ECO:0007669"/>
    <property type="project" value="UniProtKB-SubCell"/>
</dbReference>
<dbReference type="GO" id="GO:0017136">
    <property type="term" value="F:histone deacetylase activity, NAD-dependent"/>
    <property type="evidence" value="ECO:0007669"/>
    <property type="project" value="TreeGrafter"/>
</dbReference>
<dbReference type="GO" id="GO:0070403">
    <property type="term" value="F:NAD+ binding"/>
    <property type="evidence" value="ECO:0007669"/>
    <property type="project" value="UniProtKB-UniRule"/>
</dbReference>
<dbReference type="GO" id="GO:0160013">
    <property type="term" value="F:NAD-dependent protein de-2-hydroxyisobutyrylase activity"/>
    <property type="evidence" value="ECO:0007669"/>
    <property type="project" value="RHEA"/>
</dbReference>
<dbReference type="GO" id="GO:0036054">
    <property type="term" value="F:protein-malonyllysine demalonylase activity"/>
    <property type="evidence" value="ECO:0007669"/>
    <property type="project" value="InterPro"/>
</dbReference>
<dbReference type="GO" id="GO:0036055">
    <property type="term" value="F:protein-succinyllysine desuccinylase activity"/>
    <property type="evidence" value="ECO:0007669"/>
    <property type="project" value="UniProtKB-UniRule"/>
</dbReference>
<dbReference type="GO" id="GO:0008270">
    <property type="term" value="F:zinc ion binding"/>
    <property type="evidence" value="ECO:0007669"/>
    <property type="project" value="UniProtKB-UniRule"/>
</dbReference>
<dbReference type="CDD" id="cd01412">
    <property type="entry name" value="SIRT5_Af1_CobB"/>
    <property type="match status" value="1"/>
</dbReference>
<dbReference type="Gene3D" id="3.30.1600.10">
    <property type="entry name" value="SIR2/SIRT2 'Small Domain"/>
    <property type="match status" value="1"/>
</dbReference>
<dbReference type="Gene3D" id="3.40.50.1220">
    <property type="entry name" value="TPP-binding domain"/>
    <property type="match status" value="1"/>
</dbReference>
<dbReference type="HAMAP" id="MF_01121">
    <property type="entry name" value="Sirtuin_ClassIII"/>
    <property type="match status" value="1"/>
</dbReference>
<dbReference type="InterPro" id="IPR029035">
    <property type="entry name" value="DHS-like_NAD/FAD-binding_dom"/>
</dbReference>
<dbReference type="InterPro" id="IPR050134">
    <property type="entry name" value="NAD-dep_sirtuin_deacylases"/>
</dbReference>
<dbReference type="InterPro" id="IPR003000">
    <property type="entry name" value="Sirtuin"/>
</dbReference>
<dbReference type="InterPro" id="IPR026591">
    <property type="entry name" value="Sirtuin_cat_small_dom_sf"/>
</dbReference>
<dbReference type="InterPro" id="IPR027546">
    <property type="entry name" value="Sirtuin_class_III"/>
</dbReference>
<dbReference type="InterPro" id="IPR026590">
    <property type="entry name" value="Ssirtuin_cat_dom"/>
</dbReference>
<dbReference type="NCBIfam" id="NF001755">
    <property type="entry name" value="PRK00481.1-5"/>
    <property type="match status" value="1"/>
</dbReference>
<dbReference type="PANTHER" id="PTHR11085:SF4">
    <property type="entry name" value="NAD-DEPENDENT PROTEIN DEACYLASE"/>
    <property type="match status" value="1"/>
</dbReference>
<dbReference type="PANTHER" id="PTHR11085">
    <property type="entry name" value="NAD-DEPENDENT PROTEIN DEACYLASE SIRTUIN-5, MITOCHONDRIAL-RELATED"/>
    <property type="match status" value="1"/>
</dbReference>
<dbReference type="Pfam" id="PF02146">
    <property type="entry name" value="SIR2"/>
    <property type="match status" value="1"/>
</dbReference>
<dbReference type="SUPFAM" id="SSF52467">
    <property type="entry name" value="DHS-like NAD/FAD-binding domain"/>
    <property type="match status" value="1"/>
</dbReference>
<dbReference type="PROSITE" id="PS50305">
    <property type="entry name" value="SIRTUIN"/>
    <property type="match status" value="1"/>
</dbReference>
<accession>P0A2F3</accession>
<accession>P97013</accession>
<name>NPD_SALTI</name>
<feature type="chain" id="PRO_0000110347" description="NAD-dependent protein deacylase">
    <location>
        <begin position="1"/>
        <end position="273"/>
    </location>
</feature>
<feature type="domain" description="Deacetylase sirtuin-type" evidence="3">
    <location>
        <begin position="20"/>
        <end position="272"/>
    </location>
</feature>
<feature type="active site" description="Proton acceptor" evidence="2">
    <location>
        <position position="147"/>
    </location>
</feature>
<feature type="binding site" evidence="2">
    <location>
        <begin position="48"/>
        <end position="67"/>
    </location>
    <ligand>
        <name>NAD(+)</name>
        <dbReference type="ChEBI" id="CHEBI:57540"/>
    </ligand>
</feature>
<feature type="binding site" evidence="2">
    <location>
        <position position="92"/>
    </location>
    <ligand>
        <name>substrate</name>
    </ligand>
</feature>
<feature type="binding site" evidence="2">
    <location>
        <position position="95"/>
    </location>
    <ligand>
        <name>substrate</name>
    </ligand>
</feature>
<feature type="binding site" evidence="2">
    <location>
        <begin position="129"/>
        <end position="132"/>
    </location>
    <ligand>
        <name>NAD(+)</name>
        <dbReference type="ChEBI" id="CHEBI:57540"/>
    </ligand>
</feature>
<feature type="binding site" evidence="2">
    <location>
        <position position="155"/>
    </location>
    <ligand>
        <name>Zn(2+)</name>
        <dbReference type="ChEBI" id="CHEBI:29105"/>
    </ligand>
</feature>
<feature type="binding site" evidence="2">
    <location>
        <position position="174"/>
    </location>
    <ligand>
        <name>Zn(2+)</name>
        <dbReference type="ChEBI" id="CHEBI:29105"/>
    </ligand>
</feature>
<feature type="binding site" evidence="2">
    <location>
        <begin position="214"/>
        <end position="216"/>
    </location>
    <ligand>
        <name>NAD(+)</name>
        <dbReference type="ChEBI" id="CHEBI:57540"/>
    </ligand>
</feature>
<feature type="binding site" evidence="2">
    <location>
        <begin position="240"/>
        <end position="242"/>
    </location>
    <ligand>
        <name>NAD(+)</name>
        <dbReference type="ChEBI" id="CHEBI:57540"/>
    </ligand>
</feature>
<feature type="binding site" evidence="2">
    <location>
        <position position="258"/>
    </location>
    <ligand>
        <name>NAD(+)</name>
        <dbReference type="ChEBI" id="CHEBI:57540"/>
    </ligand>
</feature>
<feature type="splice variant" id="VSP_058461" description="In isoform CobB-Short." evidence="1">
    <location>
        <begin position="1"/>
        <end position="37"/>
    </location>
</feature>
<gene>
    <name evidence="2" type="primary">cobB</name>
    <name type="ordered locus">STY1261</name>
    <name type="ordered locus">t1699</name>
</gene>
<keyword id="KW-0877">Alternative promoter usage</keyword>
<keyword id="KW-0963">Cytoplasm</keyword>
<keyword id="KW-0479">Metal-binding</keyword>
<keyword id="KW-0520">NAD</keyword>
<keyword id="KW-0808">Transferase</keyword>
<keyword id="KW-0862">Zinc</keyword>
<evidence type="ECO:0000250" key="1">
    <source>
        <dbReference type="UniProtKB" id="P0A2F2"/>
    </source>
</evidence>
<evidence type="ECO:0000255" key="2">
    <source>
        <dbReference type="HAMAP-Rule" id="MF_01121"/>
    </source>
</evidence>
<evidence type="ECO:0000255" key="3">
    <source>
        <dbReference type="PROSITE-ProRule" id="PRU00236"/>
    </source>
</evidence>
<evidence type="ECO:0000305" key="4"/>
<sequence length="273" mass="31138">MQSRRFHRLSRFRKNKRLLRERLRQRIFFRDRVVPEMMENPRVLVLTGAGISAESGIRTFRAADGLWEEHRVEDVATPEGFARNPGLVQTFYNARRQQLQQPEIQPNAAHLALAKLEEALGDRFLLVTQNIDNLHERAGNRNIIHMHGELLKVRCSQSGQILEWNGDVMPEDKCHCCQFPAPLRPHVVWFGEMPLGMDEIYMALSMADIFIAIGTSGHVYPAAGFVHEAKLHGAHTVELNLEPSQVGSEFEEKHYGPASQVVPEFVDKFLKGL</sequence>
<proteinExistence type="inferred from homology"/>
<protein>
    <recommendedName>
        <fullName evidence="2">NAD-dependent protein deacylase</fullName>
        <ecNumber evidence="2">2.3.1.286</ecNumber>
    </recommendedName>
    <alternativeName>
        <fullName evidence="2">Regulatory protein SIR2 homolog</fullName>
    </alternativeName>
</protein>